<name>GCH1_SALA4</name>
<sequence>MPSLSKEAALVHDALVARGLETPLRPPMDELDNETRKSLIAGHMTEIMQLLNLDLSDDSLMETPHRIAKMYVDEIFAGLDYANFPKITLIENKMKVDEMVTVRDITLTSTCEHHFVTIDGKATVAYIPKDSVIGLSKINRIVQFFAQRPQVQERLTQQILTALQTLLGTNNVAVSIDAVHYCVKARGIRDATSATTTTSLGGLFKSSQNTRQEFLRAVRHHP</sequence>
<evidence type="ECO:0000255" key="1">
    <source>
        <dbReference type="HAMAP-Rule" id="MF_00223"/>
    </source>
</evidence>
<feature type="chain" id="PRO_1000100190" description="GTP cyclohydrolase 1">
    <location>
        <begin position="1"/>
        <end position="222"/>
    </location>
</feature>
<feature type="binding site" evidence="1">
    <location>
        <position position="111"/>
    </location>
    <ligand>
        <name>Zn(2+)</name>
        <dbReference type="ChEBI" id="CHEBI:29105"/>
    </ligand>
</feature>
<feature type="binding site" evidence="1">
    <location>
        <position position="114"/>
    </location>
    <ligand>
        <name>Zn(2+)</name>
        <dbReference type="ChEBI" id="CHEBI:29105"/>
    </ligand>
</feature>
<feature type="binding site" evidence="1">
    <location>
        <position position="182"/>
    </location>
    <ligand>
        <name>Zn(2+)</name>
        <dbReference type="ChEBI" id="CHEBI:29105"/>
    </ligand>
</feature>
<proteinExistence type="inferred from homology"/>
<dbReference type="EC" id="3.5.4.16" evidence="1"/>
<dbReference type="EMBL" id="CP001138">
    <property type="protein sequence ID" value="ACH49050.1"/>
    <property type="molecule type" value="Genomic_DNA"/>
</dbReference>
<dbReference type="RefSeq" id="WP_001139611.1">
    <property type="nucleotide sequence ID" value="NC_011149.1"/>
</dbReference>
<dbReference type="SMR" id="B5EYP3"/>
<dbReference type="KEGG" id="sea:SeAg_B2339"/>
<dbReference type="HOGENOM" id="CLU_049768_3_2_6"/>
<dbReference type="UniPathway" id="UPA00848">
    <property type="reaction ID" value="UER00151"/>
</dbReference>
<dbReference type="Proteomes" id="UP000008819">
    <property type="component" value="Chromosome"/>
</dbReference>
<dbReference type="GO" id="GO:0005737">
    <property type="term" value="C:cytoplasm"/>
    <property type="evidence" value="ECO:0007669"/>
    <property type="project" value="TreeGrafter"/>
</dbReference>
<dbReference type="GO" id="GO:0005525">
    <property type="term" value="F:GTP binding"/>
    <property type="evidence" value="ECO:0007669"/>
    <property type="project" value="UniProtKB-KW"/>
</dbReference>
<dbReference type="GO" id="GO:0003934">
    <property type="term" value="F:GTP cyclohydrolase I activity"/>
    <property type="evidence" value="ECO:0007669"/>
    <property type="project" value="UniProtKB-UniRule"/>
</dbReference>
<dbReference type="GO" id="GO:0008270">
    <property type="term" value="F:zinc ion binding"/>
    <property type="evidence" value="ECO:0007669"/>
    <property type="project" value="UniProtKB-UniRule"/>
</dbReference>
<dbReference type="GO" id="GO:0006730">
    <property type="term" value="P:one-carbon metabolic process"/>
    <property type="evidence" value="ECO:0007669"/>
    <property type="project" value="UniProtKB-UniRule"/>
</dbReference>
<dbReference type="GO" id="GO:0006729">
    <property type="term" value="P:tetrahydrobiopterin biosynthetic process"/>
    <property type="evidence" value="ECO:0007669"/>
    <property type="project" value="TreeGrafter"/>
</dbReference>
<dbReference type="GO" id="GO:0046654">
    <property type="term" value="P:tetrahydrofolate biosynthetic process"/>
    <property type="evidence" value="ECO:0007669"/>
    <property type="project" value="UniProtKB-UniRule"/>
</dbReference>
<dbReference type="CDD" id="cd00642">
    <property type="entry name" value="GTP_cyclohydro1"/>
    <property type="match status" value="1"/>
</dbReference>
<dbReference type="FunFam" id="1.10.286.10:FF:000002">
    <property type="entry name" value="GTP cyclohydrolase 1"/>
    <property type="match status" value="1"/>
</dbReference>
<dbReference type="FunFam" id="3.30.1130.10:FF:000001">
    <property type="entry name" value="GTP cyclohydrolase 1"/>
    <property type="match status" value="1"/>
</dbReference>
<dbReference type="Gene3D" id="1.10.286.10">
    <property type="match status" value="1"/>
</dbReference>
<dbReference type="Gene3D" id="3.30.1130.10">
    <property type="match status" value="1"/>
</dbReference>
<dbReference type="HAMAP" id="MF_00223">
    <property type="entry name" value="FolE"/>
    <property type="match status" value="1"/>
</dbReference>
<dbReference type="InterPro" id="IPR043133">
    <property type="entry name" value="GTP-CH-I_C/QueF"/>
</dbReference>
<dbReference type="InterPro" id="IPR043134">
    <property type="entry name" value="GTP-CH-I_N"/>
</dbReference>
<dbReference type="InterPro" id="IPR001474">
    <property type="entry name" value="GTP_CycHdrlase_I"/>
</dbReference>
<dbReference type="InterPro" id="IPR018234">
    <property type="entry name" value="GTP_CycHdrlase_I_CS"/>
</dbReference>
<dbReference type="InterPro" id="IPR020602">
    <property type="entry name" value="GTP_CycHdrlase_I_dom"/>
</dbReference>
<dbReference type="NCBIfam" id="TIGR00063">
    <property type="entry name" value="folE"/>
    <property type="match status" value="1"/>
</dbReference>
<dbReference type="NCBIfam" id="NF006824">
    <property type="entry name" value="PRK09347.1-1"/>
    <property type="match status" value="1"/>
</dbReference>
<dbReference type="NCBIfam" id="NF006825">
    <property type="entry name" value="PRK09347.1-2"/>
    <property type="match status" value="1"/>
</dbReference>
<dbReference type="NCBIfam" id="NF006826">
    <property type="entry name" value="PRK09347.1-3"/>
    <property type="match status" value="1"/>
</dbReference>
<dbReference type="PANTHER" id="PTHR11109:SF7">
    <property type="entry name" value="GTP CYCLOHYDROLASE 1"/>
    <property type="match status" value="1"/>
</dbReference>
<dbReference type="PANTHER" id="PTHR11109">
    <property type="entry name" value="GTP CYCLOHYDROLASE I"/>
    <property type="match status" value="1"/>
</dbReference>
<dbReference type="Pfam" id="PF01227">
    <property type="entry name" value="GTP_cyclohydroI"/>
    <property type="match status" value="1"/>
</dbReference>
<dbReference type="SUPFAM" id="SSF55620">
    <property type="entry name" value="Tetrahydrobiopterin biosynthesis enzymes-like"/>
    <property type="match status" value="1"/>
</dbReference>
<dbReference type="PROSITE" id="PS00859">
    <property type="entry name" value="GTP_CYCLOHYDROL_1_1"/>
    <property type="match status" value="1"/>
</dbReference>
<dbReference type="PROSITE" id="PS00860">
    <property type="entry name" value="GTP_CYCLOHYDROL_1_2"/>
    <property type="match status" value="1"/>
</dbReference>
<comment type="catalytic activity">
    <reaction evidence="1">
        <text>GTP + H2O = 7,8-dihydroneopterin 3'-triphosphate + formate + H(+)</text>
        <dbReference type="Rhea" id="RHEA:17473"/>
        <dbReference type="ChEBI" id="CHEBI:15377"/>
        <dbReference type="ChEBI" id="CHEBI:15378"/>
        <dbReference type="ChEBI" id="CHEBI:15740"/>
        <dbReference type="ChEBI" id="CHEBI:37565"/>
        <dbReference type="ChEBI" id="CHEBI:58462"/>
        <dbReference type="EC" id="3.5.4.16"/>
    </reaction>
</comment>
<comment type="pathway">
    <text evidence="1">Cofactor biosynthesis; 7,8-dihydroneopterin triphosphate biosynthesis; 7,8-dihydroneopterin triphosphate from GTP: step 1/1.</text>
</comment>
<comment type="subunit">
    <text evidence="1">Homomer.</text>
</comment>
<comment type="similarity">
    <text evidence="1">Belongs to the GTP cyclohydrolase I family.</text>
</comment>
<accession>B5EYP3</accession>
<reference key="1">
    <citation type="journal article" date="2011" name="J. Bacteriol.">
        <title>Comparative genomics of 28 Salmonella enterica isolates: evidence for CRISPR-mediated adaptive sublineage evolution.</title>
        <authorList>
            <person name="Fricke W.F."/>
            <person name="Mammel M.K."/>
            <person name="McDermott P.F."/>
            <person name="Tartera C."/>
            <person name="White D.G."/>
            <person name="Leclerc J.E."/>
            <person name="Ravel J."/>
            <person name="Cebula T.A."/>
        </authorList>
    </citation>
    <scope>NUCLEOTIDE SEQUENCE [LARGE SCALE GENOMIC DNA]</scope>
    <source>
        <strain>SL483</strain>
    </source>
</reference>
<protein>
    <recommendedName>
        <fullName evidence="1">GTP cyclohydrolase 1</fullName>
        <ecNumber evidence="1">3.5.4.16</ecNumber>
    </recommendedName>
    <alternativeName>
        <fullName evidence="1">GTP cyclohydrolase I</fullName>
        <shortName evidence="1">GTP-CH-I</shortName>
    </alternativeName>
</protein>
<keyword id="KW-0342">GTP-binding</keyword>
<keyword id="KW-0378">Hydrolase</keyword>
<keyword id="KW-0479">Metal-binding</keyword>
<keyword id="KW-0547">Nucleotide-binding</keyword>
<keyword id="KW-0554">One-carbon metabolism</keyword>
<keyword id="KW-0862">Zinc</keyword>
<organism>
    <name type="scientific">Salmonella agona (strain SL483)</name>
    <dbReference type="NCBI Taxonomy" id="454166"/>
    <lineage>
        <taxon>Bacteria</taxon>
        <taxon>Pseudomonadati</taxon>
        <taxon>Pseudomonadota</taxon>
        <taxon>Gammaproteobacteria</taxon>
        <taxon>Enterobacterales</taxon>
        <taxon>Enterobacteriaceae</taxon>
        <taxon>Salmonella</taxon>
    </lineage>
</organism>
<gene>
    <name evidence="1" type="primary">folE</name>
    <name type="ordered locus">SeAg_B2339</name>
</gene>